<comment type="function">
    <text evidence="1">Specifically dimethylates two adjacent adenosines (A1518 and A1519) in the loop of a conserved hairpin near the 3'-end of 16S rRNA in the 30S particle. May play a critical role in biogenesis of 30S subunits.</text>
</comment>
<comment type="catalytic activity">
    <reaction evidence="1">
        <text>adenosine(1518)/adenosine(1519) in 16S rRNA + 4 S-adenosyl-L-methionine = N(6)-dimethyladenosine(1518)/N(6)-dimethyladenosine(1519) in 16S rRNA + 4 S-adenosyl-L-homocysteine + 4 H(+)</text>
        <dbReference type="Rhea" id="RHEA:19609"/>
        <dbReference type="Rhea" id="RHEA-COMP:10232"/>
        <dbReference type="Rhea" id="RHEA-COMP:10233"/>
        <dbReference type="ChEBI" id="CHEBI:15378"/>
        <dbReference type="ChEBI" id="CHEBI:57856"/>
        <dbReference type="ChEBI" id="CHEBI:59789"/>
        <dbReference type="ChEBI" id="CHEBI:74411"/>
        <dbReference type="ChEBI" id="CHEBI:74493"/>
        <dbReference type="EC" id="2.1.1.182"/>
    </reaction>
</comment>
<comment type="subcellular location">
    <subcellularLocation>
        <location evidence="1">Cytoplasm</location>
    </subcellularLocation>
</comment>
<comment type="similarity">
    <text evidence="1">Belongs to the class I-like SAM-binding methyltransferase superfamily. rRNA adenine N(6)-methyltransferase family. RsmA subfamily.</text>
</comment>
<reference key="1">
    <citation type="submission" date="2009-02" db="EMBL/GenBank/DDBJ databases">
        <title>Vibrio splendidus str. LGP32 complete genome.</title>
        <authorList>
            <person name="Mazel D."/>
            <person name="Le Roux F."/>
        </authorList>
    </citation>
    <scope>NUCLEOTIDE SEQUENCE [LARGE SCALE GENOMIC DNA]</scope>
    <source>
        <strain>LGP32</strain>
    </source>
</reference>
<feature type="chain" id="PRO_1000194403" description="Ribosomal RNA small subunit methyltransferase A">
    <location>
        <begin position="1"/>
        <end position="271"/>
    </location>
</feature>
<feature type="binding site" evidence="1">
    <location>
        <position position="18"/>
    </location>
    <ligand>
        <name>S-adenosyl-L-methionine</name>
        <dbReference type="ChEBI" id="CHEBI:59789"/>
    </ligand>
</feature>
<feature type="binding site" evidence="1">
    <location>
        <position position="20"/>
    </location>
    <ligand>
        <name>S-adenosyl-L-methionine</name>
        <dbReference type="ChEBI" id="CHEBI:59789"/>
    </ligand>
</feature>
<feature type="binding site" evidence="1">
    <location>
        <position position="45"/>
    </location>
    <ligand>
        <name>S-adenosyl-L-methionine</name>
        <dbReference type="ChEBI" id="CHEBI:59789"/>
    </ligand>
</feature>
<feature type="binding site" evidence="1">
    <location>
        <position position="66"/>
    </location>
    <ligand>
        <name>S-adenosyl-L-methionine</name>
        <dbReference type="ChEBI" id="CHEBI:59789"/>
    </ligand>
</feature>
<feature type="binding site" evidence="1">
    <location>
        <position position="91"/>
    </location>
    <ligand>
        <name>S-adenosyl-L-methionine</name>
        <dbReference type="ChEBI" id="CHEBI:59789"/>
    </ligand>
</feature>
<feature type="binding site" evidence="1">
    <location>
        <position position="112"/>
    </location>
    <ligand>
        <name>S-adenosyl-L-methionine</name>
        <dbReference type="ChEBI" id="CHEBI:59789"/>
    </ligand>
</feature>
<protein>
    <recommendedName>
        <fullName evidence="1">Ribosomal RNA small subunit methyltransferase A</fullName>
        <ecNumber evidence="1">2.1.1.182</ecNumber>
    </recommendedName>
    <alternativeName>
        <fullName evidence="1">16S rRNA (adenine(1518)-N(6)/adenine(1519)-N(6))-dimethyltransferase</fullName>
    </alternativeName>
    <alternativeName>
        <fullName evidence="1">16S rRNA dimethyladenosine transferase</fullName>
    </alternativeName>
    <alternativeName>
        <fullName evidence="1">16S rRNA dimethylase</fullName>
    </alternativeName>
    <alternativeName>
        <fullName evidence="1">S-adenosylmethionine-6-N', N'-adenosyl(rRNA) dimethyltransferase</fullName>
    </alternativeName>
</protein>
<dbReference type="EC" id="2.1.1.182" evidence="1"/>
<dbReference type="EMBL" id="FM954972">
    <property type="protein sequence ID" value="CAV17379.1"/>
    <property type="molecule type" value="Genomic_DNA"/>
</dbReference>
<dbReference type="SMR" id="B7VIE2"/>
<dbReference type="STRING" id="575788.VS_0370"/>
<dbReference type="KEGG" id="vsp:VS_0370"/>
<dbReference type="eggNOG" id="COG0030">
    <property type="taxonomic scope" value="Bacteria"/>
</dbReference>
<dbReference type="HOGENOM" id="CLU_041220_0_1_6"/>
<dbReference type="Proteomes" id="UP000009100">
    <property type="component" value="Chromosome 1"/>
</dbReference>
<dbReference type="GO" id="GO:0005829">
    <property type="term" value="C:cytosol"/>
    <property type="evidence" value="ECO:0007669"/>
    <property type="project" value="TreeGrafter"/>
</dbReference>
<dbReference type="GO" id="GO:0052908">
    <property type="term" value="F:16S rRNA (adenine(1518)-N(6)/adenine(1519)-N(6))-dimethyltransferase activity"/>
    <property type="evidence" value="ECO:0007669"/>
    <property type="project" value="UniProtKB-EC"/>
</dbReference>
<dbReference type="GO" id="GO:0003723">
    <property type="term" value="F:RNA binding"/>
    <property type="evidence" value="ECO:0007669"/>
    <property type="project" value="UniProtKB-KW"/>
</dbReference>
<dbReference type="FunFam" id="1.10.8.100:FF:000001">
    <property type="entry name" value="Ribosomal RNA small subunit methyltransferase A"/>
    <property type="match status" value="1"/>
</dbReference>
<dbReference type="FunFam" id="3.40.50.150:FF:000006">
    <property type="entry name" value="Ribosomal RNA small subunit methyltransferase A"/>
    <property type="match status" value="1"/>
</dbReference>
<dbReference type="Gene3D" id="1.10.8.100">
    <property type="entry name" value="Ribosomal RNA adenine dimethylase-like, domain 2"/>
    <property type="match status" value="1"/>
</dbReference>
<dbReference type="Gene3D" id="3.40.50.150">
    <property type="entry name" value="Vaccinia Virus protein VP39"/>
    <property type="match status" value="1"/>
</dbReference>
<dbReference type="HAMAP" id="MF_00607">
    <property type="entry name" value="16SrRNA_methyltr_A"/>
    <property type="match status" value="1"/>
</dbReference>
<dbReference type="InterPro" id="IPR001737">
    <property type="entry name" value="KsgA/Erm"/>
</dbReference>
<dbReference type="InterPro" id="IPR023165">
    <property type="entry name" value="rRNA_Ade_diMease-like_C"/>
</dbReference>
<dbReference type="InterPro" id="IPR020596">
    <property type="entry name" value="rRNA_Ade_Mease_Trfase_CS"/>
</dbReference>
<dbReference type="InterPro" id="IPR020598">
    <property type="entry name" value="rRNA_Ade_methylase_Trfase_N"/>
</dbReference>
<dbReference type="InterPro" id="IPR011530">
    <property type="entry name" value="rRNA_adenine_dimethylase"/>
</dbReference>
<dbReference type="InterPro" id="IPR029063">
    <property type="entry name" value="SAM-dependent_MTases_sf"/>
</dbReference>
<dbReference type="NCBIfam" id="TIGR00755">
    <property type="entry name" value="ksgA"/>
    <property type="match status" value="1"/>
</dbReference>
<dbReference type="PANTHER" id="PTHR11727">
    <property type="entry name" value="DIMETHYLADENOSINE TRANSFERASE"/>
    <property type="match status" value="1"/>
</dbReference>
<dbReference type="PANTHER" id="PTHR11727:SF7">
    <property type="entry name" value="DIMETHYLADENOSINE TRANSFERASE-RELATED"/>
    <property type="match status" value="1"/>
</dbReference>
<dbReference type="Pfam" id="PF00398">
    <property type="entry name" value="RrnaAD"/>
    <property type="match status" value="1"/>
</dbReference>
<dbReference type="SMART" id="SM00650">
    <property type="entry name" value="rADc"/>
    <property type="match status" value="1"/>
</dbReference>
<dbReference type="SUPFAM" id="SSF53335">
    <property type="entry name" value="S-adenosyl-L-methionine-dependent methyltransferases"/>
    <property type="match status" value="1"/>
</dbReference>
<dbReference type="PROSITE" id="PS01131">
    <property type="entry name" value="RRNA_A_DIMETH"/>
    <property type="match status" value="1"/>
</dbReference>
<dbReference type="PROSITE" id="PS51689">
    <property type="entry name" value="SAM_RNA_A_N6_MT"/>
    <property type="match status" value="1"/>
</dbReference>
<organism>
    <name type="scientific">Vibrio atlanticus (strain LGP32)</name>
    <name type="common">Vibrio splendidus (strain Mel32)</name>
    <dbReference type="NCBI Taxonomy" id="575788"/>
    <lineage>
        <taxon>Bacteria</taxon>
        <taxon>Pseudomonadati</taxon>
        <taxon>Pseudomonadota</taxon>
        <taxon>Gammaproteobacteria</taxon>
        <taxon>Vibrionales</taxon>
        <taxon>Vibrionaceae</taxon>
        <taxon>Vibrio</taxon>
    </lineage>
</organism>
<sequence length="271" mass="31022">MRNDVHLGHKARKRFGQNFLNDPYIIDGIVSSINPLPGQNLVEIGPGLGAITEPVGKLVDKFTVIELDRDLAERLRNHPDLAEKLTIYEGDAMKFDFEQLVKPNNKLRIFGNLPYNISTPLMFHLFEFHKDVQDMHFMLQKEVVNRLAAGPGTKAYGRLTVMAQYYCKVTPVLEVPPTAFVPPPKVDSAVVRLQPYEVLPYPAKDLKWLDRVCREGFNQRRKTVRNCYKSLIDKEVLEELGVNPGMRPENLTLEQFVDMANWLHDSHNADK</sequence>
<proteinExistence type="inferred from homology"/>
<evidence type="ECO:0000255" key="1">
    <source>
        <dbReference type="HAMAP-Rule" id="MF_00607"/>
    </source>
</evidence>
<name>RSMA_VIBA3</name>
<keyword id="KW-0963">Cytoplasm</keyword>
<keyword id="KW-0489">Methyltransferase</keyword>
<keyword id="KW-0694">RNA-binding</keyword>
<keyword id="KW-0698">rRNA processing</keyword>
<keyword id="KW-0949">S-adenosyl-L-methionine</keyword>
<keyword id="KW-0808">Transferase</keyword>
<gene>
    <name evidence="1" type="primary">rsmA</name>
    <name evidence="1" type="synonym">ksgA</name>
    <name type="ordered locus">VS_0370</name>
</gene>
<accession>B7VIE2</accession>